<protein>
    <recommendedName>
        <fullName>Chondroitin sulfate synthase 3</fullName>
        <ecNumber>2.4.1.175</ecNumber>
        <ecNumber>2.4.1.226</ecNumber>
    </recommendedName>
    <alternativeName>
        <fullName>Carbohydrate synthase 2</fullName>
    </alternativeName>
    <alternativeName>
        <fullName>Chondroitin glucuronyltransferase 3</fullName>
    </alternativeName>
    <alternativeName>
        <fullName>Chondroitin synthase 2</fullName>
        <shortName>ChSy-2</shortName>
    </alternativeName>
    <alternativeName>
        <fullName>Glucuronosyl-N-acetylgalactosaminyl-proteoglycan 4-beta-N-acetylgalactosaminyltransferase II</fullName>
    </alternativeName>
    <alternativeName>
        <fullName>N-acetylgalactosaminyl-proteoglycan 3-beta-glucuronosyltransferase 3</fullName>
    </alternativeName>
    <alternativeName>
        <fullName>N-acetylgalactosaminyltransferase 3</fullName>
    </alternativeName>
</protein>
<accession>Q5DTK1</accession>
<accession>B2RXU7</accession>
<evidence type="ECO:0000250" key="1"/>
<evidence type="ECO:0000250" key="2">
    <source>
        <dbReference type="UniProtKB" id="Q70JA7"/>
    </source>
</evidence>
<evidence type="ECO:0000255" key="3"/>
<evidence type="ECO:0000256" key="4">
    <source>
        <dbReference type="SAM" id="MobiDB-lite"/>
    </source>
</evidence>
<evidence type="ECO:0000305" key="5"/>
<proteinExistence type="evidence at transcript level"/>
<organism>
    <name type="scientific">Mus musculus</name>
    <name type="common">Mouse</name>
    <dbReference type="NCBI Taxonomy" id="10090"/>
    <lineage>
        <taxon>Eukaryota</taxon>
        <taxon>Metazoa</taxon>
        <taxon>Chordata</taxon>
        <taxon>Craniata</taxon>
        <taxon>Vertebrata</taxon>
        <taxon>Euteleostomi</taxon>
        <taxon>Mammalia</taxon>
        <taxon>Eutheria</taxon>
        <taxon>Euarchontoglires</taxon>
        <taxon>Glires</taxon>
        <taxon>Rodentia</taxon>
        <taxon>Myomorpha</taxon>
        <taxon>Muroidea</taxon>
        <taxon>Muridae</taxon>
        <taxon>Murinae</taxon>
        <taxon>Mus</taxon>
        <taxon>Mus</taxon>
    </lineage>
</organism>
<keyword id="KW-0325">Glycoprotein</keyword>
<keyword id="KW-0333">Golgi apparatus</keyword>
<keyword id="KW-0472">Membrane</keyword>
<keyword id="KW-0479">Metal-binding</keyword>
<keyword id="KW-1185">Reference proteome</keyword>
<keyword id="KW-0735">Signal-anchor</keyword>
<keyword id="KW-0808">Transferase</keyword>
<keyword id="KW-0812">Transmembrane</keyword>
<keyword id="KW-1133">Transmembrane helix</keyword>
<gene>
    <name type="primary">Chsy3</name>
    <name type="synonym">Chsy2</name>
    <name type="synonym">Css3</name>
    <name type="synonym">Kiaa4168</name>
</gene>
<dbReference type="EC" id="2.4.1.175"/>
<dbReference type="EC" id="2.4.1.226"/>
<dbReference type="EMBL" id="AK220519">
    <property type="protein sequence ID" value="BAD90307.1"/>
    <property type="status" value="ALT_INIT"/>
    <property type="molecule type" value="mRNA"/>
</dbReference>
<dbReference type="EMBL" id="CH466528">
    <property type="protein sequence ID" value="EDL09842.1"/>
    <property type="molecule type" value="Genomic_DNA"/>
</dbReference>
<dbReference type="EMBL" id="BC151164">
    <property type="protein sequence ID" value="AAI51165.1"/>
    <property type="molecule type" value="mRNA"/>
</dbReference>
<dbReference type="EMBL" id="BC151165">
    <property type="protein sequence ID" value="AAI51166.1"/>
    <property type="molecule type" value="mRNA"/>
</dbReference>
<dbReference type="EMBL" id="BC157985">
    <property type="protein sequence ID" value="AAI57986.1"/>
    <property type="molecule type" value="mRNA"/>
</dbReference>
<dbReference type="CCDS" id="CCDS37829.1"/>
<dbReference type="RefSeq" id="NP_001074797.1">
    <property type="nucleotide sequence ID" value="NM_001081328.1"/>
</dbReference>
<dbReference type="SMR" id="Q5DTK1"/>
<dbReference type="FunCoup" id="Q5DTK1">
    <property type="interactions" value="149"/>
</dbReference>
<dbReference type="STRING" id="10090.ENSMUSP00000079546"/>
<dbReference type="CAZy" id="GT31">
    <property type="family name" value="Glycosyltransferase Family 31"/>
</dbReference>
<dbReference type="CAZy" id="GT7">
    <property type="family name" value="Glycosyltransferase Family 7"/>
</dbReference>
<dbReference type="GlyCosmos" id="Q5DTK1">
    <property type="glycosylation" value="4 sites, No reported glycans"/>
</dbReference>
<dbReference type="GlyGen" id="Q5DTK1">
    <property type="glycosylation" value="4 sites, 2 N-linked glycans (2 sites)"/>
</dbReference>
<dbReference type="iPTMnet" id="Q5DTK1"/>
<dbReference type="PhosphoSitePlus" id="Q5DTK1"/>
<dbReference type="SwissPalm" id="Q5DTK1"/>
<dbReference type="PaxDb" id="10090-ENSMUSP00000079546"/>
<dbReference type="PeptideAtlas" id="Q5DTK1"/>
<dbReference type="ProteomicsDB" id="279075"/>
<dbReference type="Antibodypedia" id="25854">
    <property type="antibodies" value="98 antibodies from 24 providers"/>
</dbReference>
<dbReference type="DNASU" id="78923"/>
<dbReference type="Ensembl" id="ENSMUST00000080721.6">
    <property type="protein sequence ID" value="ENSMUSP00000079546.5"/>
    <property type="gene ID" value="ENSMUSG00000058152.9"/>
</dbReference>
<dbReference type="Ensembl" id="ENSMUST00000238155.2">
    <property type="protein sequence ID" value="ENSMUSP00000158180.2"/>
    <property type="gene ID" value="ENSMUSG00000058152.9"/>
</dbReference>
<dbReference type="GeneID" id="78923"/>
<dbReference type="KEGG" id="mmu:78923"/>
<dbReference type="UCSC" id="uc008ezw.1">
    <property type="organism name" value="mouse"/>
</dbReference>
<dbReference type="AGR" id="MGI:1926173"/>
<dbReference type="CTD" id="337876"/>
<dbReference type="MGI" id="MGI:1926173">
    <property type="gene designation" value="Chsy3"/>
</dbReference>
<dbReference type="VEuPathDB" id="HostDB:ENSMUSG00000058152"/>
<dbReference type="eggNOG" id="KOG3588">
    <property type="taxonomic scope" value="Eukaryota"/>
</dbReference>
<dbReference type="GeneTree" id="ENSGT01050000244857"/>
<dbReference type="HOGENOM" id="CLU_016244_2_0_1"/>
<dbReference type="InParanoid" id="Q5DTK1"/>
<dbReference type="OMA" id="CADRVNC"/>
<dbReference type="OrthoDB" id="431432at2759"/>
<dbReference type="PhylomeDB" id="Q5DTK1"/>
<dbReference type="TreeFam" id="TF318303"/>
<dbReference type="Reactome" id="R-MMU-2022870">
    <property type="pathway name" value="Chondroitin sulfate biosynthesis"/>
</dbReference>
<dbReference type="BioGRID-ORCS" id="78923">
    <property type="hits" value="1 hit in 78 CRISPR screens"/>
</dbReference>
<dbReference type="ChiTaRS" id="Chsy3">
    <property type="organism name" value="mouse"/>
</dbReference>
<dbReference type="PRO" id="PR:Q5DTK1"/>
<dbReference type="Proteomes" id="UP000000589">
    <property type="component" value="Chromosome 18"/>
</dbReference>
<dbReference type="RNAct" id="Q5DTK1">
    <property type="molecule type" value="protein"/>
</dbReference>
<dbReference type="Bgee" id="ENSMUSG00000058152">
    <property type="expression patterns" value="Expressed in humerus cartilage element and 116 other cell types or tissues"/>
</dbReference>
<dbReference type="GO" id="GO:0005794">
    <property type="term" value="C:Golgi apparatus"/>
    <property type="evidence" value="ECO:0000314"/>
    <property type="project" value="MGI"/>
</dbReference>
<dbReference type="GO" id="GO:0032580">
    <property type="term" value="C:Golgi cisterna membrane"/>
    <property type="evidence" value="ECO:0007669"/>
    <property type="project" value="UniProtKB-SubCell"/>
</dbReference>
<dbReference type="GO" id="GO:0047238">
    <property type="term" value="F:glucuronosyl-N-acetylgalactosaminyl-proteoglycan 4-beta-N-acetylgalactosaminyltransferase activity"/>
    <property type="evidence" value="ECO:0000316"/>
    <property type="project" value="MGI"/>
</dbReference>
<dbReference type="GO" id="GO:0046872">
    <property type="term" value="F:metal ion binding"/>
    <property type="evidence" value="ECO:0007669"/>
    <property type="project" value="UniProtKB-KW"/>
</dbReference>
<dbReference type="GO" id="GO:0050510">
    <property type="term" value="F:N-acetylgalactosaminyl-proteoglycan 3-beta-glucuronosyltransferase activity"/>
    <property type="evidence" value="ECO:0000316"/>
    <property type="project" value="MGI"/>
</dbReference>
<dbReference type="GO" id="GO:0050650">
    <property type="term" value="P:chondroitin sulfate proteoglycan biosynthetic process"/>
    <property type="evidence" value="ECO:0000316"/>
    <property type="project" value="MGI"/>
</dbReference>
<dbReference type="FunFam" id="3.90.550.10:FF:000060">
    <property type="entry name" value="Hexosyltransferase"/>
    <property type="match status" value="1"/>
</dbReference>
<dbReference type="FunFam" id="3.90.550.50:FF:000004">
    <property type="entry name" value="Hexosyltransferase"/>
    <property type="match status" value="1"/>
</dbReference>
<dbReference type="Gene3D" id="3.90.550.50">
    <property type="match status" value="1"/>
</dbReference>
<dbReference type="Gene3D" id="3.90.550.10">
    <property type="entry name" value="Spore Coat Polysaccharide Biosynthesis Protein SpsA, Chain A"/>
    <property type="match status" value="1"/>
</dbReference>
<dbReference type="InterPro" id="IPR008428">
    <property type="entry name" value="Chond_GalNAc"/>
</dbReference>
<dbReference type="InterPro" id="IPR051227">
    <property type="entry name" value="CS_glycosyltransferase"/>
</dbReference>
<dbReference type="InterPro" id="IPR029044">
    <property type="entry name" value="Nucleotide-diphossugar_trans"/>
</dbReference>
<dbReference type="PANTHER" id="PTHR12369:SF40">
    <property type="entry name" value="CHONDROITIN SULFATE SYNTHASE 3"/>
    <property type="match status" value="1"/>
</dbReference>
<dbReference type="PANTHER" id="PTHR12369">
    <property type="entry name" value="CHONDROITIN SYNTHASE"/>
    <property type="match status" value="1"/>
</dbReference>
<dbReference type="Pfam" id="PF05679">
    <property type="entry name" value="CHGN"/>
    <property type="match status" value="1"/>
</dbReference>
<dbReference type="SUPFAM" id="SSF53448">
    <property type="entry name" value="Nucleotide-diphospho-sugar transferases"/>
    <property type="match status" value="2"/>
</dbReference>
<sequence length="884" mass="100099">MAVRSRRPWVSVALGLVLGFTAASWLIAPRVAELSEKRRRGSSLCSYYGRSATGPRADAQQLLPQPQSRPRLEQSPPPASHELPGPQQPEAAPGGPSFRSSPWQQPALLPQRRRGHTPEGATALPGAPAAKGEPEEEDGGAADPRKGGRPGSSHNGSGDGGAAVPTSGPGDFLYVGVMTAQKYLGSRALAAQRTWARFIPGRVEFFSSQQSPSAALGQPPPPLPVIALPGVDDSYPPQKKSFMMIKYMHDHYLDKYEWFMRADDDVYIKGDKLEEFLRSLNSSKPLYLGQTGLGNTEELGKLGLEPGENFCMGGPGMIFSREVLRRMVPHIGECLREMYTTHEDVEVGRCVRRFGGTQCVWSYEMQQLFHENYEHNRKGYIQDLHNSKIHAAITLHPNKRPAYQYRLHNYMLSRKISELRYRTIQLHRESALMSKLSNSEVSKEDQQLGRTPSFNHFQPRERNEVMEWEFLTGKLLYSAAENQPPRQSINSILRSALDDTVLQVMEMINENAKSRGRLIDFKEIQYGYRRVDPMHGVEYILDLLLLYKRHKGRKLTVPVRRHAYLQQPFSKPFFREVEELDVNRLVESINSGTQSFSVISNSLKILSSLQEAKDIGGHNEKKVHILVPLVGRYDIFLRFMENFESTCLIPKQNVKLVIILFSRDAGQESIKHIELIQEYQSRYPSAEMMLIPMKGEFSRGLGLEMASSQFDNDTLLLFCDVDLIFRGDFLQRCRDNTVQGQQVYYPIIFSQYDPKVTHMRNPPTEGDFVFSKETGFWRDYGYGITCIYKSDLLGAGGFDTSIQGWGLEDVDLYNKVILSGLRPFRSQEVGVVHIFHPVHCDPNLDPKQYKMCLGSKASTFASTMQLAELWLEKHLGVRDNRTLS</sequence>
<name>CHSS3_MOUSE</name>
<reference key="1">
    <citation type="submission" date="2005-02" db="EMBL/GenBank/DDBJ databases">
        <title>Prediction of the coding sequences of mouse homologues of KIAA gene. The complete nucleotide sequences of mouse KIAA-homologous cDNAs identified by screening of terminal sequences of cDNA clones randomly sampled from size-fractionated libraries.</title>
        <authorList>
            <person name="Okazaki N."/>
            <person name="Kikuno R.F."/>
            <person name="Ohara R."/>
            <person name="Inamoto S."/>
            <person name="Nagase T."/>
            <person name="Ohara O."/>
            <person name="Koga H."/>
        </authorList>
    </citation>
    <scope>NUCLEOTIDE SEQUENCE [LARGE SCALE MRNA]</scope>
    <source>
        <tissue>Fetal brain</tissue>
    </source>
</reference>
<reference key="2">
    <citation type="submission" date="2005-09" db="EMBL/GenBank/DDBJ databases">
        <authorList>
            <person name="Mural R.J."/>
            <person name="Adams M.D."/>
            <person name="Myers E.W."/>
            <person name="Smith H.O."/>
            <person name="Venter J.C."/>
        </authorList>
    </citation>
    <scope>NUCLEOTIDE SEQUENCE [LARGE SCALE GENOMIC DNA]</scope>
</reference>
<reference key="3">
    <citation type="journal article" date="2004" name="Genome Res.">
        <title>The status, quality, and expansion of the NIH full-length cDNA project: the Mammalian Gene Collection (MGC).</title>
        <authorList>
            <consortium name="The MGC Project Team"/>
        </authorList>
    </citation>
    <scope>NUCLEOTIDE SEQUENCE [LARGE SCALE MRNA]</scope>
    <source>
        <tissue>Brain</tissue>
    </source>
</reference>
<comment type="function">
    <text evidence="2">Has both beta-1,3-glucuronic acid and beta-1,4-N-acetylgalactosamine transferase activity. Transfers glucuronic acid (GlcUA) from UDP-GlcUA and N-acetylgalactosamine (GalNAc) from UDP-GalNAc to the non-reducing end of the elongating chondroitin polymer. Specific activity is much reduced compared to CHSY1.</text>
</comment>
<comment type="catalytic activity">
    <reaction>
        <text>3-O-(beta-D-GlcA-(1-&gt;3)-beta-D-GalNAc-(1-&gt;4)-beta-D-GlcA-(1-&gt;3)-beta-D-Gal-(1-&gt;3)-beta-D-Gal-(1-&gt;4)-beta-D-Xyl)-L-seryl-[protein] + UDP-N-acetyl-alpha-D-galactosamine = 3-O-(beta-D-GalNAc-(1-&gt;4)-beta-D-GlcA-(1-&gt;3)-beta-D-GalNAc-(1-&gt;4)-beta-D-GlcA-(1-&gt;3)-beta-D-Gal-(1-&gt;3)-beta-D-Gal-(1-&gt;4)-beta-D-Xyl)-L-seryl-[protein] + UDP + H(+)</text>
        <dbReference type="Rhea" id="RHEA:20800"/>
        <dbReference type="Rhea" id="RHEA-COMP:14058"/>
        <dbReference type="Rhea" id="RHEA-COMP:14059"/>
        <dbReference type="ChEBI" id="CHEBI:15378"/>
        <dbReference type="ChEBI" id="CHEBI:58223"/>
        <dbReference type="ChEBI" id="CHEBI:67138"/>
        <dbReference type="ChEBI" id="CHEBI:138442"/>
        <dbReference type="ChEBI" id="CHEBI:138443"/>
        <dbReference type="EC" id="2.4.1.175"/>
    </reaction>
</comment>
<comment type="catalytic activity">
    <reaction>
        <text>3-O-{beta-D-GlcA-(1-&gt;3)-[beta-D-GalNAc-(1-&gt;4)-beta-D-GlcA-(1-&gt;3)](n)-beta-D-GalNAc-(1-&gt;4)-beta-D-GlcA-(1-&gt;3)-beta-D-Gal-(1-&gt;3)-beta-D-Gal-(1-&gt;4)-beta-D-Xyl}-L-seryl-[protein] + UDP-N-acetyl-alpha-D-galactosamine = 3-O-{[beta-D-GalNAc-(1-&gt;4)-beta-D-GlcA-(1-&gt;3)](n+1)-beta-D-GalNAc-(1-&gt;4)-beta-D-GlcA-(1-&gt;3)-beta-D-Gal-(1-&gt;3)-beta-D-Gal-(1-&gt;4)-beta-D-Xyl}-L-seryl-[protein] + UDP + H(+)</text>
        <dbReference type="Rhea" id="RHEA:55000"/>
        <dbReference type="Rhea" id="RHEA-COMP:14060"/>
        <dbReference type="Rhea" id="RHEA-COMP:14301"/>
        <dbReference type="ChEBI" id="CHEBI:15378"/>
        <dbReference type="ChEBI" id="CHEBI:58223"/>
        <dbReference type="ChEBI" id="CHEBI:67138"/>
        <dbReference type="ChEBI" id="CHEBI:138444"/>
        <dbReference type="ChEBI" id="CHEBI:138445"/>
        <dbReference type="EC" id="2.4.1.175"/>
    </reaction>
</comment>
<comment type="catalytic activity">
    <reaction>
        <text>3-O-(beta-D-GalNAc-(1-&gt;4)-beta-D-GlcA-(1-&gt;3)-beta-D-Gal-(1-&gt;3)-beta-D-Gal-(1-&gt;4)-beta-D-Xyl)-L-seryl-[protein] + UDP-alpha-D-glucuronate = 3-O-(beta-D-GlcA-(1-&gt;3)-beta-D-GalNAc-(1-&gt;4)-beta-D-GlcA-(1-&gt;3)-beta-D-Gal-(1-&gt;3)-beta-D-Gal-(1-&gt;4)-beta-D-Xyl)-L-seryl-[protein] + UDP + H(+)</text>
        <dbReference type="Rhea" id="RHEA:23428"/>
        <dbReference type="Rhea" id="RHEA-COMP:12575"/>
        <dbReference type="Rhea" id="RHEA-COMP:14058"/>
        <dbReference type="ChEBI" id="CHEBI:15378"/>
        <dbReference type="ChEBI" id="CHEBI:58052"/>
        <dbReference type="ChEBI" id="CHEBI:58223"/>
        <dbReference type="ChEBI" id="CHEBI:132105"/>
        <dbReference type="ChEBI" id="CHEBI:138442"/>
        <dbReference type="EC" id="2.4.1.226"/>
    </reaction>
</comment>
<comment type="catalytic activity">
    <reaction>
        <text>3-O-{[beta-D-GalNAc-(1-&gt;4)-beta-D-GlcA-(1-&gt;3)](n)-beta-D-GalNAc-(1-&gt;4)-beta-D-GlcA-(1-&gt;3)-beta-D-Gal-(1-&gt;3)-beta-D-Gal-(1-&gt;4)-beta-D-Xyl}-L-seryl-[protein] + UDP-alpha-D-glucuronate = 3-O-{beta-D-GlcA-(1-&gt;3)-[beta-D-GalNAc-(1-&gt;4)-beta-D-GlcA-(1-&gt;3)](n)-beta-D-GalNAc-(1-&gt;4)-beta-D-GlcA-(1-&gt;3)-beta-D-Gal-(1-&gt;3)-beta-D-Gal-(1-&gt;4)-beta-D-Xyl}-L-seryl-[protein] + UDP + H(+)</text>
        <dbReference type="Rhea" id="RHEA:54996"/>
        <dbReference type="Rhea" id="RHEA-COMP:14060"/>
        <dbReference type="Rhea" id="RHEA-COMP:14061"/>
        <dbReference type="ChEBI" id="CHEBI:15378"/>
        <dbReference type="ChEBI" id="CHEBI:58052"/>
        <dbReference type="ChEBI" id="CHEBI:58223"/>
        <dbReference type="ChEBI" id="CHEBI:138444"/>
        <dbReference type="ChEBI" id="CHEBI:138445"/>
        <dbReference type="EC" id="2.4.1.226"/>
    </reaction>
</comment>
<comment type="cofactor">
    <cofactor evidence="1">
        <name>Co(2+)</name>
        <dbReference type="ChEBI" id="CHEBI:48828"/>
    </cofactor>
    <cofactor evidence="1">
        <name>Mn(2+)</name>
        <dbReference type="ChEBI" id="CHEBI:29035"/>
    </cofactor>
    <cofactor evidence="1">
        <name>Cd(2+)</name>
        <dbReference type="ChEBI" id="CHEBI:48775"/>
    </cofactor>
    <text evidence="1">Divalent metal cations. Highest activities are measured with Co(2+), Mn(2+) and Cd(2+).</text>
</comment>
<comment type="subcellular location">
    <subcellularLocation>
        <location evidence="5">Golgi apparatus</location>
        <location evidence="5">Golgi stack membrane</location>
        <topology evidence="5">Single-pass type II membrane protein</topology>
    </subcellularLocation>
</comment>
<comment type="similarity">
    <text evidence="5">Belongs to the chondroitin N-acetylgalactosaminyltransferase family.</text>
</comment>
<comment type="sequence caution" evidence="5">
    <conflict type="erroneous initiation">
        <sequence resource="EMBL-CDS" id="BAD90307"/>
    </conflict>
    <text>Extended N-terminus.</text>
</comment>
<feature type="chain" id="PRO_0000320145" description="Chondroitin sulfate synthase 3">
    <location>
        <begin position="1"/>
        <end position="884"/>
    </location>
</feature>
<feature type="topological domain" description="Cytoplasmic" evidence="3">
    <location>
        <begin position="1"/>
        <end position="7"/>
    </location>
</feature>
<feature type="transmembrane region" description="Helical; Signal-anchor for type II membrane protein" evidence="3">
    <location>
        <begin position="8"/>
        <end position="28"/>
    </location>
</feature>
<feature type="topological domain" description="Lumenal" evidence="3">
    <location>
        <begin position="29"/>
        <end position="884"/>
    </location>
</feature>
<feature type="region of interest" description="Disordered" evidence="4">
    <location>
        <begin position="47"/>
        <end position="164"/>
    </location>
</feature>
<feature type="region of interest" description="Disordered" evidence="4">
    <location>
        <begin position="437"/>
        <end position="456"/>
    </location>
</feature>
<feature type="compositionally biased region" description="Low complexity" evidence="4">
    <location>
        <begin position="60"/>
        <end position="69"/>
    </location>
</feature>
<feature type="compositionally biased region" description="Low complexity" evidence="4">
    <location>
        <begin position="84"/>
        <end position="96"/>
    </location>
</feature>
<feature type="binding site" evidence="3">
    <location>
        <position position="722"/>
    </location>
    <ligand>
        <name>a divalent metal cation</name>
        <dbReference type="ChEBI" id="CHEBI:60240"/>
    </ligand>
</feature>
<feature type="binding site" evidence="3">
    <location>
        <position position="836"/>
    </location>
    <ligand>
        <name>a divalent metal cation</name>
        <dbReference type="ChEBI" id="CHEBI:60240"/>
    </ligand>
</feature>
<feature type="glycosylation site" description="N-linked (GlcNAc...) asparagine" evidence="3">
    <location>
        <position position="155"/>
    </location>
</feature>
<feature type="glycosylation site" description="N-linked (GlcNAc...) asparagine" evidence="3">
    <location>
        <position position="281"/>
    </location>
</feature>
<feature type="glycosylation site" description="N-linked (GlcNAc...) asparagine" evidence="3">
    <location>
        <position position="712"/>
    </location>
</feature>
<feature type="glycosylation site" description="N-linked (GlcNAc...) asparagine" evidence="3">
    <location>
        <position position="880"/>
    </location>
</feature>
<feature type="sequence conflict" description="In Ref. 1; BAD90307." evidence="5" ref="1">
    <original>L</original>
    <variation>P</variation>
    <location>
        <position position="108"/>
    </location>
</feature>
<feature type="sequence conflict" description="In Ref. 1; BAD90307." evidence="5" ref="1">
    <original>V</original>
    <variation>A</variation>
    <location>
        <position position="164"/>
    </location>
</feature>